<proteinExistence type="inferred from homology"/>
<keyword id="KW-0028">Amino-acid biosynthesis</keyword>
<keyword id="KW-0100">Branched-chain amino acid biosynthesis</keyword>
<keyword id="KW-0963">Cytoplasm</keyword>
<keyword id="KW-0432">Leucine biosynthesis</keyword>
<keyword id="KW-0464">Manganese</keyword>
<keyword id="KW-0479">Metal-binding</keyword>
<keyword id="KW-0808">Transferase</keyword>
<protein>
    <recommendedName>
        <fullName evidence="1">2-isopropylmalate synthase</fullName>
        <ecNumber evidence="1">2.3.3.13</ecNumber>
    </recommendedName>
    <alternativeName>
        <fullName evidence="1">Alpha-IPM synthase</fullName>
    </alternativeName>
    <alternativeName>
        <fullName evidence="1">Alpha-isopropylmalate synthase</fullName>
    </alternativeName>
</protein>
<sequence>MSNRVIIFDTTLRDGEQALAASLTVKEKLQIALALERLGVDVMEVGFPVSSPGDFESVQTIAKTIKNSRVCALSRALESDIDAAAQALSVAEQFRIHTFISTSTIHVENKLKRSFDQVLDMAVGAVKYARRFTDDVEFSCEDAGRTPIDNLCRMVEEAIKAGARTINIPDTVGYTVPSEFGGIIQTLFNRVPNIDQAVISVHCHDDLGLSVANSITAVQHGARQIECTVNGIGERAGNCSLEEIAMILSTRKGELGLETGINAKEIHRTSSLVSQLCNMPVQANKAIVGANAFTHSSGIHQDGMLKAQNTYEIMTPESIGLNRNNLNMTSRSGRHVIKHRMSELGYGEQDYDMDVLYEEFLALADKKGQVFDYDLEALAFMEAQAEDDDHFELQQLVVHSDSTEGSATATVKVAVNGETITEAATGNGPVDAAYKAVARASGCKTNITSYQLSAKGEGHNALGQVDITAKYREQNFHGVGLATDVVEASAKALIHVMNLTWRADKVADCKQRIQQNKQEFGSV</sequence>
<dbReference type="EC" id="2.3.3.13" evidence="1"/>
<dbReference type="EMBL" id="CP000931">
    <property type="protein sequence ID" value="ABZ75013.1"/>
    <property type="molecule type" value="Genomic_DNA"/>
</dbReference>
<dbReference type="RefSeq" id="WP_012275567.1">
    <property type="nucleotide sequence ID" value="NC_010334.1"/>
</dbReference>
<dbReference type="SMR" id="B0TQM0"/>
<dbReference type="STRING" id="458817.Shal_0438"/>
<dbReference type="KEGG" id="shl:Shal_0438"/>
<dbReference type="eggNOG" id="COG0119">
    <property type="taxonomic scope" value="Bacteria"/>
</dbReference>
<dbReference type="HOGENOM" id="CLU_022158_0_1_6"/>
<dbReference type="OrthoDB" id="9803573at2"/>
<dbReference type="UniPathway" id="UPA00048">
    <property type="reaction ID" value="UER00070"/>
</dbReference>
<dbReference type="Proteomes" id="UP000001317">
    <property type="component" value="Chromosome"/>
</dbReference>
<dbReference type="GO" id="GO:0005829">
    <property type="term" value="C:cytosol"/>
    <property type="evidence" value="ECO:0007669"/>
    <property type="project" value="TreeGrafter"/>
</dbReference>
<dbReference type="GO" id="GO:0003852">
    <property type="term" value="F:2-isopropylmalate synthase activity"/>
    <property type="evidence" value="ECO:0007669"/>
    <property type="project" value="UniProtKB-UniRule"/>
</dbReference>
<dbReference type="GO" id="GO:0003985">
    <property type="term" value="F:acetyl-CoA C-acetyltransferase activity"/>
    <property type="evidence" value="ECO:0007669"/>
    <property type="project" value="UniProtKB-UniRule"/>
</dbReference>
<dbReference type="GO" id="GO:0030145">
    <property type="term" value="F:manganese ion binding"/>
    <property type="evidence" value="ECO:0007669"/>
    <property type="project" value="UniProtKB-UniRule"/>
</dbReference>
<dbReference type="GO" id="GO:0009098">
    <property type="term" value="P:L-leucine biosynthetic process"/>
    <property type="evidence" value="ECO:0007669"/>
    <property type="project" value="UniProtKB-UniRule"/>
</dbReference>
<dbReference type="CDD" id="cd07940">
    <property type="entry name" value="DRE_TIM_IPMS"/>
    <property type="match status" value="1"/>
</dbReference>
<dbReference type="FunFam" id="1.10.238.260:FF:000001">
    <property type="entry name" value="2-isopropylmalate synthase"/>
    <property type="match status" value="1"/>
</dbReference>
<dbReference type="FunFam" id="3.20.20.70:FF:000010">
    <property type="entry name" value="2-isopropylmalate synthase"/>
    <property type="match status" value="1"/>
</dbReference>
<dbReference type="Gene3D" id="1.10.238.260">
    <property type="match status" value="1"/>
</dbReference>
<dbReference type="Gene3D" id="3.30.160.270">
    <property type="match status" value="1"/>
</dbReference>
<dbReference type="Gene3D" id="3.20.20.70">
    <property type="entry name" value="Aldolase class I"/>
    <property type="match status" value="1"/>
</dbReference>
<dbReference type="HAMAP" id="MF_01025">
    <property type="entry name" value="LeuA_type1"/>
    <property type="match status" value="1"/>
</dbReference>
<dbReference type="InterPro" id="IPR050073">
    <property type="entry name" value="2-IPM_HCS-like"/>
</dbReference>
<dbReference type="InterPro" id="IPR013709">
    <property type="entry name" value="2-isopropylmalate_synth_dimer"/>
</dbReference>
<dbReference type="InterPro" id="IPR002034">
    <property type="entry name" value="AIPM/Hcit_synth_CS"/>
</dbReference>
<dbReference type="InterPro" id="IPR013785">
    <property type="entry name" value="Aldolase_TIM"/>
</dbReference>
<dbReference type="InterPro" id="IPR054691">
    <property type="entry name" value="LeuA/HCS_post-cat"/>
</dbReference>
<dbReference type="InterPro" id="IPR036230">
    <property type="entry name" value="LeuA_allosteric_dom_sf"/>
</dbReference>
<dbReference type="InterPro" id="IPR005671">
    <property type="entry name" value="LeuA_bact_synth"/>
</dbReference>
<dbReference type="InterPro" id="IPR000891">
    <property type="entry name" value="PYR_CT"/>
</dbReference>
<dbReference type="NCBIfam" id="TIGR00973">
    <property type="entry name" value="leuA_bact"/>
    <property type="match status" value="1"/>
</dbReference>
<dbReference type="NCBIfam" id="NF002084">
    <property type="entry name" value="PRK00915.1-1"/>
    <property type="match status" value="1"/>
</dbReference>
<dbReference type="NCBIfam" id="NF002086">
    <property type="entry name" value="PRK00915.1-3"/>
    <property type="match status" value="1"/>
</dbReference>
<dbReference type="PANTHER" id="PTHR10277:SF9">
    <property type="entry name" value="2-ISOPROPYLMALATE SYNTHASE 1, CHLOROPLASTIC-RELATED"/>
    <property type="match status" value="1"/>
</dbReference>
<dbReference type="PANTHER" id="PTHR10277">
    <property type="entry name" value="HOMOCITRATE SYNTHASE-RELATED"/>
    <property type="match status" value="1"/>
</dbReference>
<dbReference type="Pfam" id="PF22617">
    <property type="entry name" value="HCS_D2"/>
    <property type="match status" value="1"/>
</dbReference>
<dbReference type="Pfam" id="PF00682">
    <property type="entry name" value="HMGL-like"/>
    <property type="match status" value="1"/>
</dbReference>
<dbReference type="Pfam" id="PF08502">
    <property type="entry name" value="LeuA_dimer"/>
    <property type="match status" value="1"/>
</dbReference>
<dbReference type="SMART" id="SM00917">
    <property type="entry name" value="LeuA_dimer"/>
    <property type="match status" value="1"/>
</dbReference>
<dbReference type="SUPFAM" id="SSF110921">
    <property type="entry name" value="2-isopropylmalate synthase LeuA, allosteric (dimerisation) domain"/>
    <property type="match status" value="1"/>
</dbReference>
<dbReference type="SUPFAM" id="SSF51569">
    <property type="entry name" value="Aldolase"/>
    <property type="match status" value="1"/>
</dbReference>
<dbReference type="PROSITE" id="PS00815">
    <property type="entry name" value="AIPM_HOMOCIT_SYNTH_1"/>
    <property type="match status" value="1"/>
</dbReference>
<dbReference type="PROSITE" id="PS00816">
    <property type="entry name" value="AIPM_HOMOCIT_SYNTH_2"/>
    <property type="match status" value="1"/>
</dbReference>
<dbReference type="PROSITE" id="PS50991">
    <property type="entry name" value="PYR_CT"/>
    <property type="match status" value="1"/>
</dbReference>
<comment type="function">
    <text evidence="1">Catalyzes the condensation of the acetyl group of acetyl-CoA with 3-methyl-2-oxobutanoate (2-ketoisovalerate) to form 3-carboxy-3-hydroxy-4-methylpentanoate (2-isopropylmalate).</text>
</comment>
<comment type="catalytic activity">
    <reaction evidence="1">
        <text>3-methyl-2-oxobutanoate + acetyl-CoA + H2O = (2S)-2-isopropylmalate + CoA + H(+)</text>
        <dbReference type="Rhea" id="RHEA:21524"/>
        <dbReference type="ChEBI" id="CHEBI:1178"/>
        <dbReference type="ChEBI" id="CHEBI:11851"/>
        <dbReference type="ChEBI" id="CHEBI:15377"/>
        <dbReference type="ChEBI" id="CHEBI:15378"/>
        <dbReference type="ChEBI" id="CHEBI:57287"/>
        <dbReference type="ChEBI" id="CHEBI:57288"/>
        <dbReference type="EC" id="2.3.3.13"/>
    </reaction>
</comment>
<comment type="cofactor">
    <cofactor evidence="1">
        <name>Mn(2+)</name>
        <dbReference type="ChEBI" id="CHEBI:29035"/>
    </cofactor>
</comment>
<comment type="pathway">
    <text evidence="1">Amino-acid biosynthesis; L-leucine biosynthesis; L-leucine from 3-methyl-2-oxobutanoate: step 1/4.</text>
</comment>
<comment type="subunit">
    <text evidence="1">Homodimer.</text>
</comment>
<comment type="subcellular location">
    <subcellularLocation>
        <location evidence="1">Cytoplasm</location>
    </subcellularLocation>
</comment>
<comment type="similarity">
    <text evidence="1">Belongs to the alpha-IPM synthase/homocitrate synthase family. LeuA type 1 subfamily.</text>
</comment>
<reference key="1">
    <citation type="submission" date="2008-01" db="EMBL/GenBank/DDBJ databases">
        <title>Complete sequence of Shewanella halifaxensis HAW-EB4.</title>
        <authorList>
            <consortium name="US DOE Joint Genome Institute"/>
            <person name="Copeland A."/>
            <person name="Lucas S."/>
            <person name="Lapidus A."/>
            <person name="Glavina del Rio T."/>
            <person name="Dalin E."/>
            <person name="Tice H."/>
            <person name="Bruce D."/>
            <person name="Goodwin L."/>
            <person name="Pitluck S."/>
            <person name="Sims D."/>
            <person name="Brettin T."/>
            <person name="Detter J.C."/>
            <person name="Han C."/>
            <person name="Kuske C.R."/>
            <person name="Schmutz J."/>
            <person name="Larimer F."/>
            <person name="Land M."/>
            <person name="Hauser L."/>
            <person name="Kyrpides N."/>
            <person name="Kim E."/>
            <person name="Zhao J.-S."/>
            <person name="Richardson P."/>
        </authorList>
    </citation>
    <scope>NUCLEOTIDE SEQUENCE [LARGE SCALE GENOMIC DNA]</scope>
    <source>
        <strain>HAW-EB4</strain>
    </source>
</reference>
<evidence type="ECO:0000255" key="1">
    <source>
        <dbReference type="HAMAP-Rule" id="MF_01025"/>
    </source>
</evidence>
<accession>B0TQM0</accession>
<name>LEU1_SHEHH</name>
<gene>
    <name evidence="1" type="primary">leuA</name>
    <name type="ordered locus">Shal_0438</name>
</gene>
<feature type="chain" id="PRO_1000149284" description="2-isopropylmalate synthase">
    <location>
        <begin position="1"/>
        <end position="523"/>
    </location>
</feature>
<feature type="domain" description="Pyruvate carboxyltransferase" evidence="1">
    <location>
        <begin position="5"/>
        <end position="267"/>
    </location>
</feature>
<feature type="region of interest" description="Regulatory domain" evidence="1">
    <location>
        <begin position="392"/>
        <end position="523"/>
    </location>
</feature>
<feature type="binding site" evidence="1">
    <location>
        <position position="14"/>
    </location>
    <ligand>
        <name>Mn(2+)</name>
        <dbReference type="ChEBI" id="CHEBI:29035"/>
    </ligand>
</feature>
<feature type="binding site" evidence="1">
    <location>
        <position position="202"/>
    </location>
    <ligand>
        <name>Mn(2+)</name>
        <dbReference type="ChEBI" id="CHEBI:29035"/>
    </ligand>
</feature>
<feature type="binding site" evidence="1">
    <location>
        <position position="204"/>
    </location>
    <ligand>
        <name>Mn(2+)</name>
        <dbReference type="ChEBI" id="CHEBI:29035"/>
    </ligand>
</feature>
<feature type="binding site" evidence="1">
    <location>
        <position position="238"/>
    </location>
    <ligand>
        <name>Mn(2+)</name>
        <dbReference type="ChEBI" id="CHEBI:29035"/>
    </ligand>
</feature>
<organism>
    <name type="scientific">Shewanella halifaxensis (strain HAW-EB4)</name>
    <dbReference type="NCBI Taxonomy" id="458817"/>
    <lineage>
        <taxon>Bacteria</taxon>
        <taxon>Pseudomonadati</taxon>
        <taxon>Pseudomonadota</taxon>
        <taxon>Gammaproteobacteria</taxon>
        <taxon>Alteromonadales</taxon>
        <taxon>Shewanellaceae</taxon>
        <taxon>Shewanella</taxon>
    </lineage>
</organism>